<organism>
    <name type="scientific">Shigella sonnei (strain Ss046)</name>
    <dbReference type="NCBI Taxonomy" id="300269"/>
    <lineage>
        <taxon>Bacteria</taxon>
        <taxon>Pseudomonadati</taxon>
        <taxon>Pseudomonadota</taxon>
        <taxon>Gammaproteobacteria</taxon>
        <taxon>Enterobacterales</taxon>
        <taxon>Enterobacteriaceae</taxon>
        <taxon>Shigella</taxon>
    </lineage>
</organism>
<evidence type="ECO:0000255" key="1">
    <source>
        <dbReference type="HAMAP-Rule" id="MF_00079"/>
    </source>
</evidence>
<feature type="chain" id="PRO_1000004509" description="ATP phosphoribosyltransferase">
    <location>
        <begin position="1"/>
        <end position="299"/>
    </location>
</feature>
<protein>
    <recommendedName>
        <fullName evidence="1">ATP phosphoribosyltransferase</fullName>
        <shortName evidence="1">ATP-PRT</shortName>
        <shortName evidence="1">ATP-PRTase</shortName>
        <ecNumber evidence="1">2.4.2.17</ecNumber>
    </recommendedName>
</protein>
<accession>Q3Z0G6</accession>
<gene>
    <name evidence="1" type="primary">hisG</name>
    <name type="ordered locus">SSON_2090</name>
</gene>
<dbReference type="EC" id="2.4.2.17" evidence="1"/>
<dbReference type="EMBL" id="CP000038">
    <property type="protein sequence ID" value="AAZ88746.1"/>
    <property type="molecule type" value="Genomic_DNA"/>
</dbReference>
<dbReference type="RefSeq" id="WP_000131782.1">
    <property type="nucleotide sequence ID" value="NC_007384.1"/>
</dbReference>
<dbReference type="SMR" id="Q3Z0G6"/>
<dbReference type="GeneID" id="93775154"/>
<dbReference type="KEGG" id="ssn:SSON_2090"/>
<dbReference type="HOGENOM" id="CLU_038115_1_0_6"/>
<dbReference type="UniPathway" id="UPA00031">
    <property type="reaction ID" value="UER00006"/>
</dbReference>
<dbReference type="Proteomes" id="UP000002529">
    <property type="component" value="Chromosome"/>
</dbReference>
<dbReference type="GO" id="GO:0005737">
    <property type="term" value="C:cytoplasm"/>
    <property type="evidence" value="ECO:0007669"/>
    <property type="project" value="UniProtKB-SubCell"/>
</dbReference>
<dbReference type="GO" id="GO:0005524">
    <property type="term" value="F:ATP binding"/>
    <property type="evidence" value="ECO:0007669"/>
    <property type="project" value="UniProtKB-KW"/>
</dbReference>
<dbReference type="GO" id="GO:0003879">
    <property type="term" value="F:ATP phosphoribosyltransferase activity"/>
    <property type="evidence" value="ECO:0007669"/>
    <property type="project" value="UniProtKB-UniRule"/>
</dbReference>
<dbReference type="GO" id="GO:0000287">
    <property type="term" value="F:magnesium ion binding"/>
    <property type="evidence" value="ECO:0007669"/>
    <property type="project" value="UniProtKB-UniRule"/>
</dbReference>
<dbReference type="GO" id="GO:0000105">
    <property type="term" value="P:L-histidine biosynthetic process"/>
    <property type="evidence" value="ECO:0007669"/>
    <property type="project" value="UniProtKB-UniRule"/>
</dbReference>
<dbReference type="CDD" id="cd13592">
    <property type="entry name" value="PBP2_HisGL2"/>
    <property type="match status" value="1"/>
</dbReference>
<dbReference type="FunFam" id="3.30.70.120:FF:000002">
    <property type="entry name" value="ATP phosphoribosyltransferase"/>
    <property type="match status" value="1"/>
</dbReference>
<dbReference type="FunFam" id="3.40.190.10:FF:000008">
    <property type="entry name" value="ATP phosphoribosyltransferase"/>
    <property type="match status" value="1"/>
</dbReference>
<dbReference type="Gene3D" id="3.30.70.120">
    <property type="match status" value="1"/>
</dbReference>
<dbReference type="Gene3D" id="3.40.190.10">
    <property type="entry name" value="Periplasmic binding protein-like II"/>
    <property type="match status" value="2"/>
</dbReference>
<dbReference type="HAMAP" id="MF_00079">
    <property type="entry name" value="HisG_Long"/>
    <property type="match status" value="1"/>
</dbReference>
<dbReference type="InterPro" id="IPR020621">
    <property type="entry name" value="ATP-PRT_HisG_long"/>
</dbReference>
<dbReference type="InterPro" id="IPR013820">
    <property type="entry name" value="ATP_PRibTrfase_cat"/>
</dbReference>
<dbReference type="InterPro" id="IPR018198">
    <property type="entry name" value="ATP_PRibTrfase_CS"/>
</dbReference>
<dbReference type="InterPro" id="IPR001348">
    <property type="entry name" value="ATP_PRibTrfase_HisG"/>
</dbReference>
<dbReference type="InterPro" id="IPR013115">
    <property type="entry name" value="HisG_C"/>
</dbReference>
<dbReference type="InterPro" id="IPR011322">
    <property type="entry name" value="N-reg_PII-like_a/b"/>
</dbReference>
<dbReference type="InterPro" id="IPR015867">
    <property type="entry name" value="N-reg_PII/ATP_PRibTrfase_C"/>
</dbReference>
<dbReference type="NCBIfam" id="TIGR00070">
    <property type="entry name" value="hisG"/>
    <property type="match status" value="1"/>
</dbReference>
<dbReference type="NCBIfam" id="TIGR03455">
    <property type="entry name" value="HisG_C-term"/>
    <property type="match status" value="1"/>
</dbReference>
<dbReference type="PANTHER" id="PTHR21403:SF8">
    <property type="entry name" value="ATP PHOSPHORIBOSYLTRANSFERASE"/>
    <property type="match status" value="1"/>
</dbReference>
<dbReference type="PANTHER" id="PTHR21403">
    <property type="entry name" value="ATP PHOSPHORIBOSYLTRANSFERASE ATP-PRTASE"/>
    <property type="match status" value="1"/>
</dbReference>
<dbReference type="Pfam" id="PF01634">
    <property type="entry name" value="HisG"/>
    <property type="match status" value="1"/>
</dbReference>
<dbReference type="Pfam" id="PF08029">
    <property type="entry name" value="HisG_C"/>
    <property type="match status" value="1"/>
</dbReference>
<dbReference type="SUPFAM" id="SSF54913">
    <property type="entry name" value="GlnB-like"/>
    <property type="match status" value="1"/>
</dbReference>
<dbReference type="SUPFAM" id="SSF53850">
    <property type="entry name" value="Periplasmic binding protein-like II"/>
    <property type="match status" value="1"/>
</dbReference>
<dbReference type="PROSITE" id="PS01316">
    <property type="entry name" value="ATP_P_PHORIBOSYLTR"/>
    <property type="match status" value="1"/>
</dbReference>
<keyword id="KW-0028">Amino-acid biosynthesis</keyword>
<keyword id="KW-0067">ATP-binding</keyword>
<keyword id="KW-0963">Cytoplasm</keyword>
<keyword id="KW-0328">Glycosyltransferase</keyword>
<keyword id="KW-0368">Histidine biosynthesis</keyword>
<keyword id="KW-0460">Magnesium</keyword>
<keyword id="KW-0479">Metal-binding</keyword>
<keyword id="KW-0547">Nucleotide-binding</keyword>
<keyword id="KW-1185">Reference proteome</keyword>
<keyword id="KW-0808">Transferase</keyword>
<comment type="function">
    <text evidence="1">Catalyzes the condensation of ATP and 5-phosphoribose 1-diphosphate to form N'-(5'-phosphoribosyl)-ATP (PR-ATP). Has a crucial role in the pathway because the rate of histidine biosynthesis seems to be controlled primarily by regulation of HisG enzymatic activity.</text>
</comment>
<comment type="catalytic activity">
    <reaction evidence="1">
        <text>1-(5-phospho-beta-D-ribosyl)-ATP + diphosphate = 5-phospho-alpha-D-ribose 1-diphosphate + ATP</text>
        <dbReference type="Rhea" id="RHEA:18473"/>
        <dbReference type="ChEBI" id="CHEBI:30616"/>
        <dbReference type="ChEBI" id="CHEBI:33019"/>
        <dbReference type="ChEBI" id="CHEBI:58017"/>
        <dbReference type="ChEBI" id="CHEBI:73183"/>
        <dbReference type="EC" id="2.4.2.17"/>
    </reaction>
</comment>
<comment type="cofactor">
    <cofactor evidence="1">
        <name>Mg(2+)</name>
        <dbReference type="ChEBI" id="CHEBI:18420"/>
    </cofactor>
</comment>
<comment type="activity regulation">
    <text evidence="1">Feedback inhibited by histidine.</text>
</comment>
<comment type="pathway">
    <text evidence="1">Amino-acid biosynthesis; L-histidine biosynthesis; L-histidine from 5-phospho-alpha-D-ribose 1-diphosphate: step 1/9.</text>
</comment>
<comment type="subunit">
    <text evidence="1">Equilibrium between an active dimeric form, an inactive hexameric form and higher aggregates. Interconversion between the various forms is largely reversible and is influenced by the natural substrates and inhibitors of the enzyme.</text>
</comment>
<comment type="subcellular location">
    <subcellularLocation>
        <location evidence="1">Cytoplasm</location>
    </subcellularLocation>
</comment>
<comment type="similarity">
    <text evidence="1">Belongs to the ATP phosphoribosyltransferase family. Long subfamily.</text>
</comment>
<sequence>MTDNTRLRIAMQKSGRLSDDSRELLARCGIKINLHTQRLIAMAENMPIDILRVRDDDIPGLVMDGVVDLGIIGENVLEEELLNRRAQGEDPRYFTLRRLDFGGCRLSLATPVDEAWDGPLSLNGKRIATSYPHLLKRYLDQKGISFKSCLLNGSVEVAPRAGLADAICDLVSTGATLEANGLREVEVIYRSKACLIQRDGEMEESKQQLIDKLLTRIQGVIQARESKYIMMHAPTERLDEVIALLPGAERPTILPLAGDQQRVAMHMVSSETLFWETMEKLKALGASSILVLPIEKMME</sequence>
<proteinExistence type="inferred from homology"/>
<name>HIS1_SHISS</name>
<reference key="1">
    <citation type="journal article" date="2005" name="Nucleic Acids Res.">
        <title>Genome dynamics and diversity of Shigella species, the etiologic agents of bacillary dysentery.</title>
        <authorList>
            <person name="Yang F."/>
            <person name="Yang J."/>
            <person name="Zhang X."/>
            <person name="Chen L."/>
            <person name="Jiang Y."/>
            <person name="Yan Y."/>
            <person name="Tang X."/>
            <person name="Wang J."/>
            <person name="Xiong Z."/>
            <person name="Dong J."/>
            <person name="Xue Y."/>
            <person name="Zhu Y."/>
            <person name="Xu X."/>
            <person name="Sun L."/>
            <person name="Chen S."/>
            <person name="Nie H."/>
            <person name="Peng J."/>
            <person name="Xu J."/>
            <person name="Wang Y."/>
            <person name="Yuan Z."/>
            <person name="Wen Y."/>
            <person name="Yao Z."/>
            <person name="Shen Y."/>
            <person name="Qiang B."/>
            <person name="Hou Y."/>
            <person name="Yu J."/>
            <person name="Jin Q."/>
        </authorList>
    </citation>
    <scope>NUCLEOTIDE SEQUENCE [LARGE SCALE GENOMIC DNA]</scope>
    <source>
        <strain>Ss046</strain>
    </source>
</reference>